<comment type="function">
    <text evidence="1">Catalyzes the dephosphorylation of undecaprenyl diphosphate (UPP). Confers resistance to bacitracin.</text>
</comment>
<comment type="catalytic activity">
    <reaction evidence="1">
        <text>di-trans,octa-cis-undecaprenyl diphosphate + H2O = di-trans,octa-cis-undecaprenyl phosphate + phosphate + H(+)</text>
        <dbReference type="Rhea" id="RHEA:28094"/>
        <dbReference type="ChEBI" id="CHEBI:15377"/>
        <dbReference type="ChEBI" id="CHEBI:15378"/>
        <dbReference type="ChEBI" id="CHEBI:43474"/>
        <dbReference type="ChEBI" id="CHEBI:58405"/>
        <dbReference type="ChEBI" id="CHEBI:60392"/>
        <dbReference type="EC" id="3.6.1.27"/>
    </reaction>
</comment>
<comment type="subcellular location">
    <subcellularLocation>
        <location evidence="1">Cell membrane</location>
        <topology evidence="1">Multi-pass membrane protein</topology>
    </subcellularLocation>
</comment>
<comment type="miscellaneous">
    <text>Bacitracin is thought to be involved in the inhibition of peptidoglycan synthesis by sequestering undecaprenyl diphosphate, thereby reducing the pool of lipid carrier available.</text>
</comment>
<comment type="similarity">
    <text evidence="1">Belongs to the UppP family.</text>
</comment>
<reference key="1">
    <citation type="journal article" date="2002" name="Nature">
        <title>Complete genome sequence of the model actinomycete Streptomyces coelicolor A3(2).</title>
        <authorList>
            <person name="Bentley S.D."/>
            <person name="Chater K.F."/>
            <person name="Cerdeno-Tarraga A.-M."/>
            <person name="Challis G.L."/>
            <person name="Thomson N.R."/>
            <person name="James K.D."/>
            <person name="Harris D.E."/>
            <person name="Quail M.A."/>
            <person name="Kieser H."/>
            <person name="Harper D."/>
            <person name="Bateman A."/>
            <person name="Brown S."/>
            <person name="Chandra G."/>
            <person name="Chen C.W."/>
            <person name="Collins M."/>
            <person name="Cronin A."/>
            <person name="Fraser A."/>
            <person name="Goble A."/>
            <person name="Hidalgo J."/>
            <person name="Hornsby T."/>
            <person name="Howarth S."/>
            <person name="Huang C.-H."/>
            <person name="Kieser T."/>
            <person name="Larke L."/>
            <person name="Murphy L.D."/>
            <person name="Oliver K."/>
            <person name="O'Neil S."/>
            <person name="Rabbinowitsch E."/>
            <person name="Rajandream M.A."/>
            <person name="Rutherford K.M."/>
            <person name="Rutter S."/>
            <person name="Seeger K."/>
            <person name="Saunders D."/>
            <person name="Sharp S."/>
            <person name="Squares R."/>
            <person name="Squares S."/>
            <person name="Taylor K."/>
            <person name="Warren T."/>
            <person name="Wietzorrek A."/>
            <person name="Woodward J.R."/>
            <person name="Barrell B.G."/>
            <person name="Parkhill J."/>
            <person name="Hopwood D.A."/>
        </authorList>
    </citation>
    <scope>NUCLEOTIDE SEQUENCE [LARGE SCALE GENOMIC DNA]</scope>
    <source>
        <strain>ATCC BAA-471 / A3(2) / M145</strain>
    </source>
</reference>
<organism>
    <name type="scientific">Streptomyces coelicolor (strain ATCC BAA-471 / A3(2) / M145)</name>
    <dbReference type="NCBI Taxonomy" id="100226"/>
    <lineage>
        <taxon>Bacteria</taxon>
        <taxon>Bacillati</taxon>
        <taxon>Actinomycetota</taxon>
        <taxon>Actinomycetes</taxon>
        <taxon>Kitasatosporales</taxon>
        <taxon>Streptomycetaceae</taxon>
        <taxon>Streptomyces</taxon>
        <taxon>Streptomyces albidoflavus group</taxon>
    </lineage>
</organism>
<evidence type="ECO:0000255" key="1">
    <source>
        <dbReference type="HAMAP-Rule" id="MF_01006"/>
    </source>
</evidence>
<feature type="chain" id="PRO_0000151211" description="Undecaprenyl-diphosphatase 1">
    <location>
        <begin position="1"/>
        <end position="278"/>
    </location>
</feature>
<feature type="transmembrane region" description="Helical" evidence="1">
    <location>
        <begin position="45"/>
        <end position="65"/>
    </location>
</feature>
<feature type="transmembrane region" description="Helical" evidence="1">
    <location>
        <begin position="95"/>
        <end position="115"/>
    </location>
</feature>
<feature type="transmembrane region" description="Helical" evidence="1">
    <location>
        <begin position="119"/>
        <end position="139"/>
    </location>
</feature>
<feature type="transmembrane region" description="Helical" evidence="1">
    <location>
        <begin position="191"/>
        <end position="211"/>
    </location>
</feature>
<feature type="transmembrane region" description="Helical" evidence="1">
    <location>
        <begin position="225"/>
        <end position="245"/>
    </location>
</feature>
<feature type="transmembrane region" description="Helical" evidence="1">
    <location>
        <begin position="256"/>
        <end position="276"/>
    </location>
</feature>
<proteinExistence type="inferred from homology"/>
<accession>Q9FC36</accession>
<name>UPPP1_STRCO</name>
<protein>
    <recommendedName>
        <fullName evidence="1">Undecaprenyl-diphosphatase 1</fullName>
        <ecNumber evidence="1">3.6.1.27</ecNumber>
    </recommendedName>
    <alternativeName>
        <fullName evidence="1">Bacitracin resistance protein 1</fullName>
    </alternativeName>
    <alternativeName>
        <fullName evidence="1">Undecaprenyl pyrophosphate phosphatase 1</fullName>
    </alternativeName>
</protein>
<gene>
    <name evidence="1" type="primary">uppP1</name>
    <name type="synonym">bacA1</name>
    <name type="synonym">upk1</name>
    <name type="ordered locus">SCO7047</name>
    <name type="ORF">SC4G1.13</name>
</gene>
<sequence length="278" mass="29480">MSAISIGQAVVLGAVEGVTEFLPVSSTGHLKIVEGLMGIPVDDDAVIGFSAVIQVGAIAAVLVYFSKDIMRIVSAWGRGLRDREERYHHDYRFAWWVIYATIPIVLVGLAAKPLIKGPLASLWVVAGSLIVGSGVMWWADRTGRHKRGEDDTSFKDAMLVGGSQILALLFPGFSRSGATMSTALMLDLDRVAATRLSFFLGIPALTGAGLYELKDALGTGAGAAPLAVGTLVSFVVAYASIAWLLKFVAKHTFNSFVVYRIAVGVLLFGLLGTGVLHS</sequence>
<dbReference type="EC" id="3.6.1.27" evidence="1"/>
<dbReference type="EMBL" id="AL939130">
    <property type="protein sequence ID" value="CAC01545.1"/>
    <property type="molecule type" value="Genomic_DNA"/>
</dbReference>
<dbReference type="RefSeq" id="NP_631109.1">
    <property type="nucleotide sequence ID" value="NC_003888.3"/>
</dbReference>
<dbReference type="RefSeq" id="WP_003972097.1">
    <property type="nucleotide sequence ID" value="NZ_VNID01000012.1"/>
</dbReference>
<dbReference type="SMR" id="Q9FC36"/>
<dbReference type="STRING" id="100226.gene:17764707"/>
<dbReference type="PaxDb" id="100226-SCO7047"/>
<dbReference type="KEGG" id="sco:SCO7047"/>
<dbReference type="PATRIC" id="fig|100226.15.peg.7151"/>
<dbReference type="eggNOG" id="COG1968">
    <property type="taxonomic scope" value="Bacteria"/>
</dbReference>
<dbReference type="HOGENOM" id="CLU_060296_1_0_11"/>
<dbReference type="InParanoid" id="Q9FC36"/>
<dbReference type="OrthoDB" id="9808289at2"/>
<dbReference type="PhylomeDB" id="Q9FC36"/>
<dbReference type="Proteomes" id="UP000001973">
    <property type="component" value="Chromosome"/>
</dbReference>
<dbReference type="GO" id="GO:0005886">
    <property type="term" value="C:plasma membrane"/>
    <property type="evidence" value="ECO:0000318"/>
    <property type="project" value="GO_Central"/>
</dbReference>
<dbReference type="GO" id="GO:0050380">
    <property type="term" value="F:undecaprenyl-diphosphatase activity"/>
    <property type="evidence" value="ECO:0000318"/>
    <property type="project" value="GO_Central"/>
</dbReference>
<dbReference type="GO" id="GO:0071555">
    <property type="term" value="P:cell wall organization"/>
    <property type="evidence" value="ECO:0007669"/>
    <property type="project" value="UniProtKB-KW"/>
</dbReference>
<dbReference type="GO" id="GO:0009252">
    <property type="term" value="P:peptidoglycan biosynthetic process"/>
    <property type="evidence" value="ECO:0007669"/>
    <property type="project" value="UniProtKB-KW"/>
</dbReference>
<dbReference type="GO" id="GO:0000270">
    <property type="term" value="P:peptidoglycan metabolic process"/>
    <property type="evidence" value="ECO:0000318"/>
    <property type="project" value="GO_Central"/>
</dbReference>
<dbReference type="GO" id="GO:0008360">
    <property type="term" value="P:regulation of cell shape"/>
    <property type="evidence" value="ECO:0007669"/>
    <property type="project" value="UniProtKB-KW"/>
</dbReference>
<dbReference type="GO" id="GO:0046677">
    <property type="term" value="P:response to antibiotic"/>
    <property type="evidence" value="ECO:0007669"/>
    <property type="project" value="UniProtKB-UniRule"/>
</dbReference>
<dbReference type="HAMAP" id="MF_01006">
    <property type="entry name" value="Undec_diphosphatase"/>
    <property type="match status" value="1"/>
</dbReference>
<dbReference type="InterPro" id="IPR003824">
    <property type="entry name" value="UppP"/>
</dbReference>
<dbReference type="NCBIfam" id="NF001392">
    <property type="entry name" value="PRK00281.2-1"/>
    <property type="match status" value="1"/>
</dbReference>
<dbReference type="NCBIfam" id="TIGR00753">
    <property type="entry name" value="undec_PP_bacA"/>
    <property type="match status" value="1"/>
</dbReference>
<dbReference type="PANTHER" id="PTHR30622">
    <property type="entry name" value="UNDECAPRENYL-DIPHOSPHATASE"/>
    <property type="match status" value="1"/>
</dbReference>
<dbReference type="PANTHER" id="PTHR30622:SF3">
    <property type="entry name" value="UNDECAPRENYL-DIPHOSPHATASE"/>
    <property type="match status" value="1"/>
</dbReference>
<dbReference type="Pfam" id="PF02673">
    <property type="entry name" value="BacA"/>
    <property type="match status" value="1"/>
</dbReference>
<keyword id="KW-0046">Antibiotic resistance</keyword>
<keyword id="KW-1003">Cell membrane</keyword>
<keyword id="KW-0133">Cell shape</keyword>
<keyword id="KW-0961">Cell wall biogenesis/degradation</keyword>
<keyword id="KW-0378">Hydrolase</keyword>
<keyword id="KW-0472">Membrane</keyword>
<keyword id="KW-0573">Peptidoglycan synthesis</keyword>
<keyword id="KW-1185">Reference proteome</keyword>
<keyword id="KW-0812">Transmembrane</keyword>
<keyword id="KW-1133">Transmembrane helix</keyword>